<sequence>MSAIDDLPPLREVIREHQLSARKALGQNFLLDLNLTARIARAAGPLEDATVVEIGPGPGGLTRALLALGARHVIAVEHDERAIPALRTIADRYPGRLEIVYTDARTFDVRPYLGSTKAKIVANLPYNIATHLLIGWLSAEPWPPWYEMMVLMFQREVAERIVATENEEAYGRLGVLANWRCETKILFDISPSAFVPPPKVTSSVVRLVPRPAPEPCDRRALEQVAAAAFGQRRKMLRQSLKSLPADPARLAAAAGIDPTRRAETIPVSGFVAMARELTNSRNDNTT</sequence>
<dbReference type="EC" id="2.1.1.182" evidence="1"/>
<dbReference type="EMBL" id="CU234118">
    <property type="protein sequence ID" value="CAL77116.1"/>
    <property type="molecule type" value="Genomic_DNA"/>
</dbReference>
<dbReference type="RefSeq" id="WP_011926272.1">
    <property type="nucleotide sequence ID" value="NC_009445.1"/>
</dbReference>
<dbReference type="SMR" id="A4YT90"/>
<dbReference type="STRING" id="114615.BRADO3322"/>
<dbReference type="KEGG" id="bra:BRADO3322"/>
<dbReference type="eggNOG" id="COG0030">
    <property type="taxonomic scope" value="Bacteria"/>
</dbReference>
<dbReference type="HOGENOM" id="CLU_041220_0_1_5"/>
<dbReference type="OrthoDB" id="9814755at2"/>
<dbReference type="Proteomes" id="UP000001994">
    <property type="component" value="Chromosome"/>
</dbReference>
<dbReference type="GO" id="GO:0005829">
    <property type="term" value="C:cytosol"/>
    <property type="evidence" value="ECO:0007669"/>
    <property type="project" value="TreeGrafter"/>
</dbReference>
<dbReference type="GO" id="GO:0052908">
    <property type="term" value="F:16S rRNA (adenine(1518)-N(6)/adenine(1519)-N(6))-dimethyltransferase activity"/>
    <property type="evidence" value="ECO:0007669"/>
    <property type="project" value="UniProtKB-EC"/>
</dbReference>
<dbReference type="GO" id="GO:0003723">
    <property type="term" value="F:RNA binding"/>
    <property type="evidence" value="ECO:0007669"/>
    <property type="project" value="UniProtKB-KW"/>
</dbReference>
<dbReference type="CDD" id="cd02440">
    <property type="entry name" value="AdoMet_MTases"/>
    <property type="match status" value="1"/>
</dbReference>
<dbReference type="FunFam" id="1.10.8.100:FF:000001">
    <property type="entry name" value="Ribosomal RNA small subunit methyltransferase A"/>
    <property type="match status" value="1"/>
</dbReference>
<dbReference type="Gene3D" id="1.10.8.100">
    <property type="entry name" value="Ribosomal RNA adenine dimethylase-like, domain 2"/>
    <property type="match status" value="1"/>
</dbReference>
<dbReference type="Gene3D" id="3.40.50.150">
    <property type="entry name" value="Vaccinia Virus protein VP39"/>
    <property type="match status" value="1"/>
</dbReference>
<dbReference type="HAMAP" id="MF_00607">
    <property type="entry name" value="16SrRNA_methyltr_A"/>
    <property type="match status" value="1"/>
</dbReference>
<dbReference type="InterPro" id="IPR001737">
    <property type="entry name" value="KsgA/Erm"/>
</dbReference>
<dbReference type="InterPro" id="IPR023165">
    <property type="entry name" value="rRNA_Ade_diMease-like_C"/>
</dbReference>
<dbReference type="InterPro" id="IPR020596">
    <property type="entry name" value="rRNA_Ade_Mease_Trfase_CS"/>
</dbReference>
<dbReference type="InterPro" id="IPR020598">
    <property type="entry name" value="rRNA_Ade_methylase_Trfase_N"/>
</dbReference>
<dbReference type="InterPro" id="IPR011530">
    <property type="entry name" value="rRNA_adenine_dimethylase"/>
</dbReference>
<dbReference type="InterPro" id="IPR029063">
    <property type="entry name" value="SAM-dependent_MTases_sf"/>
</dbReference>
<dbReference type="NCBIfam" id="TIGR00755">
    <property type="entry name" value="ksgA"/>
    <property type="match status" value="1"/>
</dbReference>
<dbReference type="PANTHER" id="PTHR11727">
    <property type="entry name" value="DIMETHYLADENOSINE TRANSFERASE"/>
    <property type="match status" value="1"/>
</dbReference>
<dbReference type="PANTHER" id="PTHR11727:SF7">
    <property type="entry name" value="DIMETHYLADENOSINE TRANSFERASE-RELATED"/>
    <property type="match status" value="1"/>
</dbReference>
<dbReference type="Pfam" id="PF00398">
    <property type="entry name" value="RrnaAD"/>
    <property type="match status" value="1"/>
</dbReference>
<dbReference type="SMART" id="SM00650">
    <property type="entry name" value="rADc"/>
    <property type="match status" value="1"/>
</dbReference>
<dbReference type="SUPFAM" id="SSF53335">
    <property type="entry name" value="S-adenosyl-L-methionine-dependent methyltransferases"/>
    <property type="match status" value="1"/>
</dbReference>
<dbReference type="PROSITE" id="PS01131">
    <property type="entry name" value="RRNA_A_DIMETH"/>
    <property type="match status" value="1"/>
</dbReference>
<dbReference type="PROSITE" id="PS51689">
    <property type="entry name" value="SAM_RNA_A_N6_MT"/>
    <property type="match status" value="1"/>
</dbReference>
<organism>
    <name type="scientific">Bradyrhizobium sp. (strain ORS 278)</name>
    <dbReference type="NCBI Taxonomy" id="114615"/>
    <lineage>
        <taxon>Bacteria</taxon>
        <taxon>Pseudomonadati</taxon>
        <taxon>Pseudomonadota</taxon>
        <taxon>Alphaproteobacteria</taxon>
        <taxon>Hyphomicrobiales</taxon>
        <taxon>Nitrobacteraceae</taxon>
        <taxon>Bradyrhizobium</taxon>
    </lineage>
</organism>
<comment type="function">
    <text evidence="1">Specifically dimethylates two adjacent adenosines (A1518 and A1519) in the loop of a conserved hairpin near the 3'-end of 16S rRNA in the 30S particle. May play a critical role in biogenesis of 30S subunits.</text>
</comment>
<comment type="catalytic activity">
    <reaction evidence="1">
        <text>adenosine(1518)/adenosine(1519) in 16S rRNA + 4 S-adenosyl-L-methionine = N(6)-dimethyladenosine(1518)/N(6)-dimethyladenosine(1519) in 16S rRNA + 4 S-adenosyl-L-homocysteine + 4 H(+)</text>
        <dbReference type="Rhea" id="RHEA:19609"/>
        <dbReference type="Rhea" id="RHEA-COMP:10232"/>
        <dbReference type="Rhea" id="RHEA-COMP:10233"/>
        <dbReference type="ChEBI" id="CHEBI:15378"/>
        <dbReference type="ChEBI" id="CHEBI:57856"/>
        <dbReference type="ChEBI" id="CHEBI:59789"/>
        <dbReference type="ChEBI" id="CHEBI:74411"/>
        <dbReference type="ChEBI" id="CHEBI:74493"/>
        <dbReference type="EC" id="2.1.1.182"/>
    </reaction>
</comment>
<comment type="subcellular location">
    <subcellularLocation>
        <location evidence="1">Cytoplasm</location>
    </subcellularLocation>
</comment>
<comment type="similarity">
    <text evidence="1">Belongs to the class I-like SAM-binding methyltransferase superfamily. rRNA adenine N(6)-methyltransferase family. RsmA subfamily.</text>
</comment>
<protein>
    <recommendedName>
        <fullName evidence="1">Ribosomal RNA small subunit methyltransferase A</fullName>
        <ecNumber evidence="1">2.1.1.182</ecNumber>
    </recommendedName>
    <alternativeName>
        <fullName evidence="1">16S rRNA (adenine(1518)-N(6)/adenine(1519)-N(6))-dimethyltransferase</fullName>
    </alternativeName>
    <alternativeName>
        <fullName evidence="1">16S rRNA dimethyladenosine transferase</fullName>
    </alternativeName>
    <alternativeName>
        <fullName evidence="1">16S rRNA dimethylase</fullName>
    </alternativeName>
    <alternativeName>
        <fullName evidence="1">S-adenosylmethionine-6-N', N'-adenosyl(rRNA) dimethyltransferase</fullName>
    </alternativeName>
</protein>
<accession>A4YT90</accession>
<keyword id="KW-0963">Cytoplasm</keyword>
<keyword id="KW-0489">Methyltransferase</keyword>
<keyword id="KW-1185">Reference proteome</keyword>
<keyword id="KW-0694">RNA-binding</keyword>
<keyword id="KW-0698">rRNA processing</keyword>
<keyword id="KW-0949">S-adenosyl-L-methionine</keyword>
<keyword id="KW-0808">Transferase</keyword>
<name>RSMA_BRASO</name>
<gene>
    <name evidence="1" type="primary">rsmA</name>
    <name evidence="1" type="synonym">ksgA</name>
    <name type="ordered locus">BRADO3322</name>
</gene>
<feature type="chain" id="PRO_1000056600" description="Ribosomal RNA small subunit methyltransferase A">
    <location>
        <begin position="1"/>
        <end position="286"/>
    </location>
</feature>
<feature type="binding site" evidence="1">
    <location>
        <position position="28"/>
    </location>
    <ligand>
        <name>S-adenosyl-L-methionine</name>
        <dbReference type="ChEBI" id="CHEBI:59789"/>
    </ligand>
</feature>
<feature type="binding site" evidence="1">
    <location>
        <position position="30"/>
    </location>
    <ligand>
        <name>S-adenosyl-L-methionine</name>
        <dbReference type="ChEBI" id="CHEBI:59789"/>
    </ligand>
</feature>
<feature type="binding site" evidence="1">
    <location>
        <position position="55"/>
    </location>
    <ligand>
        <name>S-adenosyl-L-methionine</name>
        <dbReference type="ChEBI" id="CHEBI:59789"/>
    </ligand>
</feature>
<feature type="binding site" evidence="1">
    <location>
        <position position="77"/>
    </location>
    <ligand>
        <name>S-adenosyl-L-methionine</name>
        <dbReference type="ChEBI" id="CHEBI:59789"/>
    </ligand>
</feature>
<feature type="binding site" evidence="1">
    <location>
        <position position="103"/>
    </location>
    <ligand>
        <name>S-adenosyl-L-methionine</name>
        <dbReference type="ChEBI" id="CHEBI:59789"/>
    </ligand>
</feature>
<feature type="binding site" evidence="1">
    <location>
        <position position="123"/>
    </location>
    <ligand>
        <name>S-adenosyl-L-methionine</name>
        <dbReference type="ChEBI" id="CHEBI:59789"/>
    </ligand>
</feature>
<reference key="1">
    <citation type="journal article" date="2007" name="Science">
        <title>Legumes symbioses: absence of nod genes in photosynthetic bradyrhizobia.</title>
        <authorList>
            <person name="Giraud E."/>
            <person name="Moulin L."/>
            <person name="Vallenet D."/>
            <person name="Barbe V."/>
            <person name="Cytryn E."/>
            <person name="Avarre J.-C."/>
            <person name="Jaubert M."/>
            <person name="Simon D."/>
            <person name="Cartieaux F."/>
            <person name="Prin Y."/>
            <person name="Bena G."/>
            <person name="Hannibal L."/>
            <person name="Fardoux J."/>
            <person name="Kojadinovic M."/>
            <person name="Vuillet L."/>
            <person name="Lajus A."/>
            <person name="Cruveiller S."/>
            <person name="Rouy Z."/>
            <person name="Mangenot S."/>
            <person name="Segurens B."/>
            <person name="Dossat C."/>
            <person name="Franck W.L."/>
            <person name="Chang W.-S."/>
            <person name="Saunders E."/>
            <person name="Bruce D."/>
            <person name="Richardson P."/>
            <person name="Normand P."/>
            <person name="Dreyfus B."/>
            <person name="Pignol D."/>
            <person name="Stacey G."/>
            <person name="Emerich D."/>
            <person name="Vermeglio A."/>
            <person name="Medigue C."/>
            <person name="Sadowsky M."/>
        </authorList>
    </citation>
    <scope>NUCLEOTIDE SEQUENCE [LARGE SCALE GENOMIC DNA]</scope>
    <source>
        <strain>ORS 278</strain>
    </source>
</reference>
<evidence type="ECO:0000255" key="1">
    <source>
        <dbReference type="HAMAP-Rule" id="MF_00607"/>
    </source>
</evidence>
<proteinExistence type="inferred from homology"/>